<reference key="1">
    <citation type="journal article" date="2001" name="DNA Res.">
        <title>Complete genome sequence of an aerobic thermoacidophilic Crenarchaeon, Sulfolobus tokodaii strain7.</title>
        <authorList>
            <person name="Kawarabayasi Y."/>
            <person name="Hino Y."/>
            <person name="Horikawa H."/>
            <person name="Jin-no K."/>
            <person name="Takahashi M."/>
            <person name="Sekine M."/>
            <person name="Baba S."/>
            <person name="Ankai A."/>
            <person name="Kosugi H."/>
            <person name="Hosoyama A."/>
            <person name="Fukui S."/>
            <person name="Nagai Y."/>
            <person name="Nishijima K."/>
            <person name="Otsuka R."/>
            <person name="Nakazawa H."/>
            <person name="Takamiya M."/>
            <person name="Kato Y."/>
            <person name="Yoshizawa T."/>
            <person name="Tanaka T."/>
            <person name="Kudoh Y."/>
            <person name="Yamazaki J."/>
            <person name="Kushida N."/>
            <person name="Oguchi A."/>
            <person name="Aoki K."/>
            <person name="Masuda S."/>
            <person name="Yanagii M."/>
            <person name="Nishimura M."/>
            <person name="Yamagishi A."/>
            <person name="Oshima T."/>
            <person name="Kikuchi H."/>
        </authorList>
    </citation>
    <scope>NUCLEOTIDE SEQUENCE [LARGE SCALE GENOMIC DNA]</scope>
    <source>
        <strain>DSM 16993 / JCM 10545 / NBRC 100140 / 7</strain>
    </source>
</reference>
<protein>
    <recommendedName>
        <fullName>UPF0147 protein STK_04605</fullName>
    </recommendedName>
</protein>
<evidence type="ECO:0000305" key="1"/>
<comment type="similarity">
    <text evidence="1">Belongs to the UPF0147 family.</text>
</comment>
<accession>Q975E9</accession>
<sequence length="89" mass="9874">MASLYDNEAKIKQAIIMLQKIVNDTSVPRNIRRAATDAIRNLQDSSLSPAVRAANAIGILEEISQDPNMPTHTRISIWNVVSMLETVKD</sequence>
<name>Y460A_SULTO</name>
<dbReference type="EMBL" id="BA000023">
    <property type="protein sequence ID" value="BAB65452.1"/>
    <property type="molecule type" value="Genomic_DNA"/>
</dbReference>
<dbReference type="RefSeq" id="WP_010978435.1">
    <property type="nucleotide sequence ID" value="NC_003106.2"/>
</dbReference>
<dbReference type="SMR" id="Q975E9"/>
<dbReference type="STRING" id="273063.STK_04605"/>
<dbReference type="KEGG" id="sto:STK_04605"/>
<dbReference type="PATRIC" id="fig|273063.9.peg.534"/>
<dbReference type="eggNOG" id="arCOG04308">
    <property type="taxonomic scope" value="Archaea"/>
</dbReference>
<dbReference type="OrthoDB" id="65304at2157"/>
<dbReference type="Proteomes" id="UP000001015">
    <property type="component" value="Chromosome"/>
</dbReference>
<dbReference type="Gene3D" id="1.20.1440.50">
    <property type="entry name" value="Ta0600-like"/>
    <property type="match status" value="1"/>
</dbReference>
<dbReference type="HAMAP" id="MF_00342">
    <property type="entry name" value="UPF0147"/>
    <property type="match status" value="1"/>
</dbReference>
<dbReference type="InterPro" id="IPR023130">
    <property type="entry name" value="Ta0600-like_sf"/>
</dbReference>
<dbReference type="InterPro" id="IPR005354">
    <property type="entry name" value="UPF0147"/>
</dbReference>
<dbReference type="NCBIfam" id="NF003319">
    <property type="entry name" value="PRK04330.1"/>
    <property type="match status" value="1"/>
</dbReference>
<dbReference type="Pfam" id="PF03685">
    <property type="entry name" value="UPF0147"/>
    <property type="match status" value="1"/>
</dbReference>
<dbReference type="SUPFAM" id="SSF158436">
    <property type="entry name" value="Ta0600-like"/>
    <property type="match status" value="1"/>
</dbReference>
<organism>
    <name type="scientific">Sulfurisphaera tokodaii (strain DSM 16993 / JCM 10545 / NBRC 100140 / 7)</name>
    <name type="common">Sulfolobus tokodaii</name>
    <dbReference type="NCBI Taxonomy" id="273063"/>
    <lineage>
        <taxon>Archaea</taxon>
        <taxon>Thermoproteota</taxon>
        <taxon>Thermoprotei</taxon>
        <taxon>Sulfolobales</taxon>
        <taxon>Sulfolobaceae</taxon>
        <taxon>Sulfurisphaera</taxon>
    </lineage>
</organism>
<proteinExistence type="inferred from homology"/>
<feature type="chain" id="PRO_0000150918" description="UPF0147 protein STK_04605">
    <location>
        <begin position="1"/>
        <end position="89"/>
    </location>
</feature>
<keyword id="KW-1185">Reference proteome</keyword>
<gene>
    <name type="ordered locus">STK_04605</name>
    <name type="ORF">STS065</name>
</gene>